<reference key="1">
    <citation type="journal article" date="2002" name="Nucleic Acids Res.">
        <title>Genome sequence of Shigella flexneri 2a: insights into pathogenicity through comparison with genomes of Escherichia coli K12 and O157.</title>
        <authorList>
            <person name="Jin Q."/>
            <person name="Yuan Z."/>
            <person name="Xu J."/>
            <person name="Wang Y."/>
            <person name="Shen Y."/>
            <person name="Lu W."/>
            <person name="Wang J."/>
            <person name="Liu H."/>
            <person name="Yang J."/>
            <person name="Yang F."/>
            <person name="Zhang X."/>
            <person name="Zhang J."/>
            <person name="Yang G."/>
            <person name="Wu H."/>
            <person name="Qu D."/>
            <person name="Dong J."/>
            <person name="Sun L."/>
            <person name="Xue Y."/>
            <person name="Zhao A."/>
            <person name="Gao Y."/>
            <person name="Zhu J."/>
            <person name="Kan B."/>
            <person name="Ding K."/>
            <person name="Chen S."/>
            <person name="Cheng H."/>
            <person name="Yao Z."/>
            <person name="He B."/>
            <person name="Chen R."/>
            <person name="Ma D."/>
            <person name="Qiang B."/>
            <person name="Wen Y."/>
            <person name="Hou Y."/>
            <person name="Yu J."/>
        </authorList>
    </citation>
    <scope>NUCLEOTIDE SEQUENCE [LARGE SCALE GENOMIC DNA]</scope>
    <source>
        <strain>301 / Serotype 2a</strain>
    </source>
</reference>
<reference key="2">
    <citation type="journal article" date="2003" name="Infect. Immun.">
        <title>Complete genome sequence and comparative genomics of Shigella flexneri serotype 2a strain 2457T.</title>
        <authorList>
            <person name="Wei J."/>
            <person name="Goldberg M.B."/>
            <person name="Burland V."/>
            <person name="Venkatesan M.M."/>
            <person name="Deng W."/>
            <person name="Fournier G."/>
            <person name="Mayhew G.F."/>
            <person name="Plunkett G. III"/>
            <person name="Rose D.J."/>
            <person name="Darling A."/>
            <person name="Mau B."/>
            <person name="Perna N.T."/>
            <person name="Payne S.M."/>
            <person name="Runyen-Janecky L.J."/>
            <person name="Zhou S."/>
            <person name="Schwartz D.C."/>
            <person name="Blattner F.R."/>
        </authorList>
    </citation>
    <scope>NUCLEOTIDE SEQUENCE [LARGE SCALE GENOMIC DNA]</scope>
    <source>
        <strain>ATCC 700930 / 2457T / Serotype 2a</strain>
    </source>
</reference>
<protein>
    <recommendedName>
        <fullName>Catabolite repressor/activator</fullName>
    </recommendedName>
    <alternativeName>
        <fullName>Fructose repressor</fullName>
    </alternativeName>
</protein>
<sequence length="334" mass="37999">MKLDEIARLAGVSRTTASYVINGKAKQYRVSDKTVEKVMAVVREHNYHPNAVAAGLRAGRTRSIGLVIPDLENTSYTRIANYLERQARQRGYQLLIACSEDQPDNEMRCIEHLLQRQVDAIIVSTSLPPEHPFYQRWANDPFPIVALDRALDREHFTSVVGADQDDAEMLAEELRKFPAETVLYLGALPELSVSFLREQGFRTAWKDDPREVHFLYANSYEREAAAQLFEKWLETHPMPQALFTTSFALLQGVMDVTLRRDGKLPSDLAIATFGDNELLDFLQCPVLAVAQRHRDVAERVLEIVLASLDEPRKPKPGLTRIKRNLYRRGVLSRS</sequence>
<keyword id="KW-0010">Activator</keyword>
<keyword id="KW-0238">DNA-binding</keyword>
<keyword id="KW-1185">Reference proteome</keyword>
<keyword id="KW-0678">Repressor</keyword>
<keyword id="KW-0804">Transcription</keyword>
<keyword id="KW-0805">Transcription regulation</keyword>
<evidence type="ECO:0000250" key="1"/>
<evidence type="ECO:0000255" key="2">
    <source>
        <dbReference type="PROSITE-ProRule" id="PRU00111"/>
    </source>
</evidence>
<dbReference type="EMBL" id="AE005674">
    <property type="protein sequence ID" value="AAN41740.1"/>
    <property type="molecule type" value="Genomic_DNA"/>
</dbReference>
<dbReference type="EMBL" id="AE014073">
    <property type="protein sequence ID" value="AAP15621.1"/>
    <property type="molecule type" value="Genomic_DNA"/>
</dbReference>
<dbReference type="RefSeq" id="NP_706033.1">
    <property type="nucleotide sequence ID" value="NC_004337.2"/>
</dbReference>
<dbReference type="RefSeq" id="WP_000762401.1">
    <property type="nucleotide sequence ID" value="NZ_WPGW01000005.1"/>
</dbReference>
<dbReference type="SMR" id="P0ACP4"/>
<dbReference type="STRING" id="198214.SF0075"/>
<dbReference type="PaxDb" id="198214-SF0075"/>
<dbReference type="GeneID" id="1024540"/>
<dbReference type="GeneID" id="86862590"/>
<dbReference type="KEGG" id="sfl:SF0075"/>
<dbReference type="KEGG" id="sfx:S0077"/>
<dbReference type="PATRIC" id="fig|198214.7.peg.88"/>
<dbReference type="HOGENOM" id="CLU_037628_6_0_6"/>
<dbReference type="Proteomes" id="UP000001006">
    <property type="component" value="Chromosome"/>
</dbReference>
<dbReference type="Proteomes" id="UP000002673">
    <property type="component" value="Chromosome"/>
</dbReference>
<dbReference type="GO" id="GO:0003700">
    <property type="term" value="F:DNA-binding transcription factor activity"/>
    <property type="evidence" value="ECO:0007669"/>
    <property type="project" value="TreeGrafter"/>
</dbReference>
<dbReference type="GO" id="GO:0000976">
    <property type="term" value="F:transcription cis-regulatory region binding"/>
    <property type="evidence" value="ECO:0007669"/>
    <property type="project" value="TreeGrafter"/>
</dbReference>
<dbReference type="GO" id="GO:0009750">
    <property type="term" value="P:response to fructose"/>
    <property type="evidence" value="ECO:0007669"/>
    <property type="project" value="InterPro"/>
</dbReference>
<dbReference type="CDD" id="cd01392">
    <property type="entry name" value="HTH_LacI"/>
    <property type="match status" value="1"/>
</dbReference>
<dbReference type="CDD" id="cd06274">
    <property type="entry name" value="PBP1_FruR"/>
    <property type="match status" value="1"/>
</dbReference>
<dbReference type="FunFam" id="1.10.260.40:FF:000008">
    <property type="entry name" value="Fructose repressor (Catabolite repressor/activator)"/>
    <property type="match status" value="1"/>
</dbReference>
<dbReference type="FunFam" id="3.40.50.2300:FF:000022">
    <property type="entry name" value="Fructose repressor (Catabolite repressor/activator)"/>
    <property type="match status" value="1"/>
</dbReference>
<dbReference type="FunFam" id="3.40.50.2300:FF:000049">
    <property type="entry name" value="Fructose repressor FruR"/>
    <property type="match status" value="1"/>
</dbReference>
<dbReference type="Gene3D" id="3.40.50.2300">
    <property type="match status" value="2"/>
</dbReference>
<dbReference type="Gene3D" id="1.10.260.40">
    <property type="entry name" value="lambda repressor-like DNA-binding domains"/>
    <property type="match status" value="1"/>
</dbReference>
<dbReference type="InterPro" id="IPR012781">
    <property type="entry name" value="Fruct_sucro_rep"/>
</dbReference>
<dbReference type="InterPro" id="IPR000843">
    <property type="entry name" value="HTH_LacI"/>
</dbReference>
<dbReference type="InterPro" id="IPR010982">
    <property type="entry name" value="Lambda_DNA-bd_dom_sf"/>
</dbReference>
<dbReference type="InterPro" id="IPR001761">
    <property type="entry name" value="Peripla_BP/Lac1_sug-bd_dom"/>
</dbReference>
<dbReference type="InterPro" id="IPR028082">
    <property type="entry name" value="Peripla_BP_I"/>
</dbReference>
<dbReference type="NCBIfam" id="TIGR02417">
    <property type="entry name" value="fruct_sucro_rep"/>
    <property type="match status" value="1"/>
</dbReference>
<dbReference type="NCBIfam" id="NF008452">
    <property type="entry name" value="PRK11303.1"/>
    <property type="match status" value="1"/>
</dbReference>
<dbReference type="PANTHER" id="PTHR30146:SF45">
    <property type="entry name" value="CATABOLITE REPRESSOR_ACTIVATOR"/>
    <property type="match status" value="1"/>
</dbReference>
<dbReference type="PANTHER" id="PTHR30146">
    <property type="entry name" value="LACI-RELATED TRANSCRIPTIONAL REPRESSOR"/>
    <property type="match status" value="1"/>
</dbReference>
<dbReference type="Pfam" id="PF00356">
    <property type="entry name" value="LacI"/>
    <property type="match status" value="1"/>
</dbReference>
<dbReference type="Pfam" id="PF00532">
    <property type="entry name" value="Peripla_BP_1"/>
    <property type="match status" value="1"/>
</dbReference>
<dbReference type="SMART" id="SM00354">
    <property type="entry name" value="HTH_LACI"/>
    <property type="match status" value="1"/>
</dbReference>
<dbReference type="SUPFAM" id="SSF47413">
    <property type="entry name" value="lambda repressor-like DNA-binding domains"/>
    <property type="match status" value="1"/>
</dbReference>
<dbReference type="SUPFAM" id="SSF53822">
    <property type="entry name" value="Periplasmic binding protein-like I"/>
    <property type="match status" value="1"/>
</dbReference>
<dbReference type="PROSITE" id="PS00356">
    <property type="entry name" value="HTH_LACI_1"/>
    <property type="match status" value="1"/>
</dbReference>
<dbReference type="PROSITE" id="PS50932">
    <property type="entry name" value="HTH_LACI_2"/>
    <property type="match status" value="1"/>
</dbReference>
<name>CRA_SHIFL</name>
<gene>
    <name type="primary">cra</name>
    <name type="synonym">fruR</name>
    <name type="ordered locus">SF0075</name>
    <name type="ordered locus">S0077</name>
</gene>
<organism>
    <name type="scientific">Shigella flexneri</name>
    <dbReference type="NCBI Taxonomy" id="623"/>
    <lineage>
        <taxon>Bacteria</taxon>
        <taxon>Pseudomonadati</taxon>
        <taxon>Pseudomonadota</taxon>
        <taxon>Gammaproteobacteria</taxon>
        <taxon>Enterobacterales</taxon>
        <taxon>Enterobacteriaceae</taxon>
        <taxon>Shigella</taxon>
    </lineage>
</organism>
<proteinExistence type="inferred from homology"/>
<accession>P0ACP4</accession>
<accession>P21168</accession>
<comment type="function">
    <text evidence="1">Global transcriptional regulator, which plays an important role in the regulation of carbon metabolism.</text>
</comment>
<comment type="subunit">
    <text evidence="1">Homotetramer.</text>
</comment>
<feature type="chain" id="PRO_0000107948" description="Catabolite repressor/activator">
    <location>
        <begin position="1"/>
        <end position="334"/>
    </location>
</feature>
<feature type="domain" description="HTH lacI-type" evidence="2">
    <location>
        <begin position="1"/>
        <end position="58"/>
    </location>
</feature>
<feature type="DNA-binding region" description="H-T-H motif" evidence="2">
    <location>
        <begin position="3"/>
        <end position="22"/>
    </location>
</feature>